<protein>
    <recommendedName>
        <fullName>Conotoxin ArMKLT2-0312</fullName>
    </recommendedName>
</protein>
<dbReference type="EMBL" id="AF215051">
    <property type="protein sequence ID" value="AAG60479.1"/>
    <property type="molecule type" value="mRNA"/>
</dbReference>
<dbReference type="SMR" id="Q9BP87"/>
<dbReference type="ConoServer" id="738">
    <property type="toxin name" value="Ar6.9 precursor"/>
</dbReference>
<dbReference type="GO" id="GO:0005576">
    <property type="term" value="C:extracellular region"/>
    <property type="evidence" value="ECO:0007669"/>
    <property type="project" value="UniProtKB-SubCell"/>
</dbReference>
<dbReference type="GO" id="GO:0008200">
    <property type="term" value="F:ion channel inhibitor activity"/>
    <property type="evidence" value="ECO:0007669"/>
    <property type="project" value="InterPro"/>
</dbReference>
<dbReference type="GO" id="GO:0090729">
    <property type="term" value="F:toxin activity"/>
    <property type="evidence" value="ECO:0007669"/>
    <property type="project" value="UniProtKB-KW"/>
</dbReference>
<dbReference type="InterPro" id="IPR004214">
    <property type="entry name" value="Conotoxin"/>
</dbReference>
<dbReference type="Pfam" id="PF02950">
    <property type="entry name" value="Conotoxin"/>
    <property type="match status" value="1"/>
</dbReference>
<comment type="subcellular location">
    <subcellularLocation>
        <location evidence="1">Secreted</location>
    </subcellularLocation>
</comment>
<comment type="tissue specificity">
    <text>Expressed by the venom duct.</text>
</comment>
<comment type="domain">
    <text evidence="1">The presence of a 'disulfide through disulfide knot' structurally defines this protein as a knottin.</text>
</comment>
<comment type="domain">
    <text>The cysteine framework is VI/VII (C-C-CC-C-C).</text>
</comment>
<comment type="similarity">
    <text evidence="3">Belongs to the conotoxin O1 superfamily.</text>
</comment>
<reference key="1">
    <citation type="journal article" date="2001" name="Mol. Biol. Evol.">
        <title>Mechanisms for evolving hypervariability: the case of conopeptides.</title>
        <authorList>
            <person name="Conticello S.G."/>
            <person name="Gilad Y."/>
            <person name="Avidan N."/>
            <person name="Ben-Asher E."/>
            <person name="Levy Z."/>
            <person name="Fainzilber M."/>
        </authorList>
    </citation>
    <scope>NUCLEOTIDE SEQUENCE [MRNA]</scope>
    <source>
        <tissue>Venom duct</tissue>
    </source>
</reference>
<proteinExistence type="evidence at transcript level"/>
<organism>
    <name type="scientific">Conus arenatus</name>
    <name type="common">Sand-dusted cone</name>
    <dbReference type="NCBI Taxonomy" id="89451"/>
    <lineage>
        <taxon>Eukaryota</taxon>
        <taxon>Metazoa</taxon>
        <taxon>Spiralia</taxon>
        <taxon>Lophotrochozoa</taxon>
        <taxon>Mollusca</taxon>
        <taxon>Gastropoda</taxon>
        <taxon>Caenogastropoda</taxon>
        <taxon>Neogastropoda</taxon>
        <taxon>Conoidea</taxon>
        <taxon>Conidae</taxon>
        <taxon>Conus</taxon>
    </lineage>
</organism>
<sequence length="78" mass="9033">MKLTCVLIIAVLFLTACQLITADYSRDKQEYRAVRLRDAMRYSRVRRQCADLGEECHTRFCCPGLRCEDLQVPTCLMA</sequence>
<evidence type="ECO:0000250" key="1"/>
<evidence type="ECO:0000255" key="2"/>
<evidence type="ECO:0000305" key="3"/>
<accession>Q9BP87</accession>
<keyword id="KW-0165">Cleavage on pair of basic residues</keyword>
<keyword id="KW-1015">Disulfide bond</keyword>
<keyword id="KW-0960">Knottin</keyword>
<keyword id="KW-0528">Neurotoxin</keyword>
<keyword id="KW-0873">Pyrrolidone carboxylic acid</keyword>
<keyword id="KW-0964">Secreted</keyword>
<keyword id="KW-0732">Signal</keyword>
<keyword id="KW-0800">Toxin</keyword>
<name>O169_CONAE</name>
<feature type="signal peptide" evidence="2">
    <location>
        <begin position="1"/>
        <end position="22"/>
    </location>
</feature>
<feature type="propeptide" id="PRO_0000404782" evidence="1">
    <location>
        <begin position="23"/>
        <end position="45"/>
    </location>
</feature>
<feature type="peptide" id="PRO_0000404783" description="Conotoxin ArMKLT2-0312">
    <location>
        <begin position="48"/>
        <end position="78"/>
    </location>
</feature>
<feature type="modified residue" description="Pyrrolidone carboxylic acid" evidence="1">
    <location>
        <position position="48"/>
    </location>
</feature>
<feature type="disulfide bond" evidence="1">
    <location>
        <begin position="49"/>
        <end position="62"/>
    </location>
</feature>
<feature type="disulfide bond" evidence="1">
    <location>
        <begin position="56"/>
        <end position="67"/>
    </location>
</feature>
<feature type="disulfide bond" evidence="1">
    <location>
        <begin position="61"/>
        <end position="75"/>
    </location>
</feature>